<proteinExistence type="inferred from homology"/>
<comment type="similarity">
    <text evidence="1">Belongs to the bacterial ribosomal protein bL33 family.</text>
</comment>
<evidence type="ECO:0000255" key="1">
    <source>
        <dbReference type="HAMAP-Rule" id="MF_00294"/>
    </source>
</evidence>
<evidence type="ECO:0000305" key="2"/>
<gene>
    <name evidence="1" type="primary">rpmG</name>
    <name type="ordered locus">Mmar10_1278</name>
</gene>
<accession>Q0AQ67</accession>
<keyword id="KW-1185">Reference proteome</keyword>
<keyword id="KW-0687">Ribonucleoprotein</keyword>
<keyword id="KW-0689">Ribosomal protein</keyword>
<name>RL33_MARMM</name>
<reference key="1">
    <citation type="submission" date="2006-08" db="EMBL/GenBank/DDBJ databases">
        <title>Complete sequence of Maricaulis maris MCS10.</title>
        <authorList>
            <consortium name="US DOE Joint Genome Institute"/>
            <person name="Copeland A."/>
            <person name="Lucas S."/>
            <person name="Lapidus A."/>
            <person name="Barry K."/>
            <person name="Detter J.C."/>
            <person name="Glavina del Rio T."/>
            <person name="Hammon N."/>
            <person name="Israni S."/>
            <person name="Dalin E."/>
            <person name="Tice H."/>
            <person name="Pitluck S."/>
            <person name="Saunders E."/>
            <person name="Brettin T."/>
            <person name="Bruce D."/>
            <person name="Han C."/>
            <person name="Tapia R."/>
            <person name="Gilna P."/>
            <person name="Schmutz J."/>
            <person name="Larimer F."/>
            <person name="Land M."/>
            <person name="Hauser L."/>
            <person name="Kyrpides N."/>
            <person name="Mikhailova N."/>
            <person name="Viollier P."/>
            <person name="Stephens C."/>
            <person name="Richardson P."/>
        </authorList>
    </citation>
    <scope>NUCLEOTIDE SEQUENCE [LARGE SCALE GENOMIC DNA]</scope>
    <source>
        <strain>MCS10</strain>
    </source>
</reference>
<organism>
    <name type="scientific">Maricaulis maris (strain MCS10)</name>
    <name type="common">Caulobacter maris</name>
    <dbReference type="NCBI Taxonomy" id="394221"/>
    <lineage>
        <taxon>Bacteria</taxon>
        <taxon>Pseudomonadati</taxon>
        <taxon>Pseudomonadota</taxon>
        <taxon>Alphaproteobacteria</taxon>
        <taxon>Maricaulales</taxon>
        <taxon>Maricaulaceae</taxon>
        <taxon>Maricaulis</taxon>
    </lineage>
</organism>
<protein>
    <recommendedName>
        <fullName evidence="1">Large ribosomal subunit protein bL33</fullName>
    </recommendedName>
    <alternativeName>
        <fullName evidence="2">50S ribosomal protein L33</fullName>
    </alternativeName>
</protein>
<feature type="chain" id="PRO_0000356534" description="Large ribosomal subunit protein bL33">
    <location>
        <begin position="1"/>
        <end position="55"/>
    </location>
</feature>
<dbReference type="EMBL" id="CP000449">
    <property type="protein sequence ID" value="ABI65570.1"/>
    <property type="molecule type" value="Genomic_DNA"/>
</dbReference>
<dbReference type="RefSeq" id="WP_011643217.1">
    <property type="nucleotide sequence ID" value="NC_008347.1"/>
</dbReference>
<dbReference type="SMR" id="Q0AQ67"/>
<dbReference type="STRING" id="394221.Mmar10_1278"/>
<dbReference type="KEGG" id="mmr:Mmar10_1278"/>
<dbReference type="eggNOG" id="COG0267">
    <property type="taxonomic scope" value="Bacteria"/>
</dbReference>
<dbReference type="HOGENOM" id="CLU_190949_1_1_5"/>
<dbReference type="OrthoDB" id="21586at2"/>
<dbReference type="Proteomes" id="UP000001964">
    <property type="component" value="Chromosome"/>
</dbReference>
<dbReference type="GO" id="GO:0022625">
    <property type="term" value="C:cytosolic large ribosomal subunit"/>
    <property type="evidence" value="ECO:0007669"/>
    <property type="project" value="TreeGrafter"/>
</dbReference>
<dbReference type="GO" id="GO:0003735">
    <property type="term" value="F:structural constituent of ribosome"/>
    <property type="evidence" value="ECO:0007669"/>
    <property type="project" value="InterPro"/>
</dbReference>
<dbReference type="GO" id="GO:0006412">
    <property type="term" value="P:translation"/>
    <property type="evidence" value="ECO:0007669"/>
    <property type="project" value="UniProtKB-UniRule"/>
</dbReference>
<dbReference type="Gene3D" id="2.20.28.120">
    <property type="entry name" value="Ribosomal protein L33"/>
    <property type="match status" value="1"/>
</dbReference>
<dbReference type="HAMAP" id="MF_00294">
    <property type="entry name" value="Ribosomal_bL33"/>
    <property type="match status" value="1"/>
</dbReference>
<dbReference type="InterPro" id="IPR001705">
    <property type="entry name" value="Ribosomal_bL33"/>
</dbReference>
<dbReference type="InterPro" id="IPR018264">
    <property type="entry name" value="Ribosomal_bL33_CS"/>
</dbReference>
<dbReference type="InterPro" id="IPR038584">
    <property type="entry name" value="Ribosomal_bL33_sf"/>
</dbReference>
<dbReference type="InterPro" id="IPR011332">
    <property type="entry name" value="Ribosomal_zn-bd"/>
</dbReference>
<dbReference type="NCBIfam" id="NF001860">
    <property type="entry name" value="PRK00595.1"/>
    <property type="match status" value="1"/>
</dbReference>
<dbReference type="NCBIfam" id="TIGR01023">
    <property type="entry name" value="rpmG_bact"/>
    <property type="match status" value="1"/>
</dbReference>
<dbReference type="PANTHER" id="PTHR15238">
    <property type="entry name" value="54S RIBOSOMAL PROTEIN L39, MITOCHONDRIAL"/>
    <property type="match status" value="1"/>
</dbReference>
<dbReference type="PANTHER" id="PTHR15238:SF1">
    <property type="entry name" value="LARGE RIBOSOMAL SUBUNIT PROTEIN BL33M"/>
    <property type="match status" value="1"/>
</dbReference>
<dbReference type="Pfam" id="PF00471">
    <property type="entry name" value="Ribosomal_L33"/>
    <property type="match status" value="1"/>
</dbReference>
<dbReference type="SUPFAM" id="SSF57829">
    <property type="entry name" value="Zn-binding ribosomal proteins"/>
    <property type="match status" value="1"/>
</dbReference>
<dbReference type="PROSITE" id="PS00582">
    <property type="entry name" value="RIBOSOMAL_L33"/>
    <property type="match status" value="1"/>
</dbReference>
<sequence>MAKPTTIKIRLNSTAGTGYFYVTKKNARTMTEKLVLKKYDPVARKHVDFKEAKIK</sequence>